<keyword id="KW-0963">Cytoplasm</keyword>
<keyword id="KW-0349">Heme</keyword>
<keyword id="KW-0408">Iron</keyword>
<keyword id="KW-0479">Metal-binding</keyword>
<keyword id="KW-0944">Nitration</keyword>
<keyword id="KW-0535">Nitrogen fixation</keyword>
<keyword id="KW-0536">Nodulation</keyword>
<keyword id="KW-0539">Nucleus</keyword>
<keyword id="KW-0561">Oxygen transport</keyword>
<keyword id="KW-0597">Phosphoprotein</keyword>
<keyword id="KW-0813">Transport</keyword>
<comment type="function">
    <text evidence="3 6">Leghemoglobin that reversibly binds oxygen O(2) through a pentacoordinated heme iron (By similarity). In root nodules, facilitates the diffusion of oxygen to the bacteroids while preventing the bacterial nitrogenase from being inactivated by buffering dioxygen, nitric oxide and carbon monoxide, and promoting the formation of reactive oxygen species (ROS, e.g. H(2)O(2)) (By similarity). This role is essential for symbiotic nitrogen fixation (SNF) (By similarity).</text>
</comment>
<comment type="subunit">
    <text evidence="4">Monomer.</text>
</comment>
<comment type="subcellular location">
    <subcellularLocation>
        <location evidence="4">Cytoplasm</location>
        <location evidence="4">Cytosol</location>
    </subcellularLocation>
    <subcellularLocation>
        <location evidence="4">Nucleus</location>
    </subcellularLocation>
</comment>
<comment type="tissue specificity">
    <text evidence="8">Root nodules.</text>
</comment>
<comment type="induction">
    <text evidence="9 10">Strongly reduced levels in boron-deficient nodules (PubMed:20132519). Inhibited by abscisic acid (ABA) in parallel with lower nitrogen fixation in nodules (PubMed:11283173).</text>
</comment>
<comment type="PTM">
    <text evidence="2">Nitrated in effective nodules and particularly in hypoxic conditions; this mechanism may play a protective role in the symbiosis by buffering toxic peroxynitrite NO(2)(-). Nitration level decrease during nodule senescence.</text>
</comment>
<comment type="PTM">
    <text evidence="5">Phosphorylation at Ser-44 disrupts the molecular environment of its porphyrin ring oxygen binding pocket, thus leading to a reduced oxygen consumption and to the delivery of oxygen O(2) to symbiosomes.</text>
</comment>
<comment type="similarity">
    <text evidence="12">Belongs to the plant globin family.</text>
</comment>
<reference key="1">
    <citation type="journal article" date="2001" name="Plant Physiol.">
        <title>Two types of pea leghemoglobin genes showing different O2-binding affinities and distinct patterns of spatial expression in nodules.</title>
        <authorList>
            <person name="Kawashima K."/>
            <person name="Suganuma N."/>
            <person name="Tamaoki M."/>
            <person name="Kouchi H."/>
        </authorList>
    </citation>
    <scope>NUCLEOTIDE SEQUENCE [MRNA]</scope>
    <scope>TISSUE SPECIFICITY</scope>
    <scope>GENE FAMILY</scope>
    <scope>NOMENCLATURE</scope>
    <source>
        <strain>cv. Sparkle</strain>
        <tissue>Root nodule</tissue>
    </source>
</reference>
<reference key="2">
    <citation type="journal article" date="2001" name="J. Exp. Bot.">
        <title>Abscisic acid induces a decline in nitrogen fixation that involves leghaemoglobin, but is independent of sucrose synthase activity.</title>
        <authorList>
            <person name="Gonzalez E.M."/>
            <person name="Galvez L."/>
            <person name="Arrese-Igor C."/>
        </authorList>
    </citation>
    <scope>REPRESSION BY ABSCISIC ACID</scope>
    <source>
        <strain>cv. Sugar snap</strain>
    </source>
</reference>
<reference key="3">
    <citation type="journal article" date="2010" name="Plant Cell Environ.">
        <title>Ligands of boron in Pisum sativum nodules are involved in regulation of oxygen concentration and rhizobial infection.</title>
        <authorList>
            <person name="Reguera M."/>
            <person name="Wimmer M."/>
            <person name="Bustos P."/>
            <person name="Goldbach H.E."/>
            <person name="Bolanos L."/>
            <person name="Bonilla I."/>
        </authorList>
    </citation>
    <scope>INDUCTION BY BORON</scope>
    <source>
        <strain>cv. Lincoln</strain>
    </source>
</reference>
<name>LGB4_PEA</name>
<organism>
    <name type="scientific">Pisum sativum</name>
    <name type="common">Garden pea</name>
    <name type="synonym">Lathyrus oleraceus</name>
    <dbReference type="NCBI Taxonomy" id="3888"/>
    <lineage>
        <taxon>Eukaryota</taxon>
        <taxon>Viridiplantae</taxon>
        <taxon>Streptophyta</taxon>
        <taxon>Embryophyta</taxon>
        <taxon>Tracheophyta</taxon>
        <taxon>Spermatophyta</taxon>
        <taxon>Magnoliopsida</taxon>
        <taxon>eudicotyledons</taxon>
        <taxon>Gunneridae</taxon>
        <taxon>Pentapetalae</taxon>
        <taxon>rosids</taxon>
        <taxon>fabids</taxon>
        <taxon>Fabales</taxon>
        <taxon>Fabaceae</taxon>
        <taxon>Papilionoideae</taxon>
        <taxon>50 kb inversion clade</taxon>
        <taxon>NPAAA clade</taxon>
        <taxon>Hologalegina</taxon>
        <taxon>IRL clade</taxon>
        <taxon>Fabeae</taxon>
        <taxon>Pisum</taxon>
    </lineage>
</organism>
<sequence>MGFTEKQEALVNSSWELFKQNPSYSVLFYTIILKKAPAAKGMFSFLKDSAEVVDSPKLQAHAEKVFGMVHDSAIQLRASGEVVLGDVTLGAIHIQKGVIDPHFVVVKEALLDTIKEASGEKWSEELSTAWEIAYEGLASAIKKAMN</sequence>
<protein>
    <recommendedName>
        <fullName evidence="11">Leghemoglobin Lb120-8</fullName>
        <shortName evidence="11">PsLb120-8</shortName>
    </recommendedName>
</protein>
<dbReference type="EMBL" id="AB015720">
    <property type="protein sequence ID" value="BAA31156.1"/>
    <property type="molecule type" value="mRNA"/>
</dbReference>
<dbReference type="PIR" id="T06220">
    <property type="entry name" value="T06220"/>
</dbReference>
<dbReference type="RefSeq" id="NP_001414485.1">
    <property type="nucleotide sequence ID" value="NM_001427556.1"/>
</dbReference>
<dbReference type="SMR" id="Q9SAZ1"/>
<dbReference type="EnsemblPlants" id="Psat2g039800.1">
    <property type="protein sequence ID" value="Psat2g039800.1.cds"/>
    <property type="gene ID" value="Psat2g039800"/>
</dbReference>
<dbReference type="GeneID" id="127121147"/>
<dbReference type="Gramene" id="Psat2g039800.1">
    <property type="protein sequence ID" value="Psat2g039800.1.cds"/>
    <property type="gene ID" value="Psat2g039800"/>
</dbReference>
<dbReference type="OrthoDB" id="2012505at2759"/>
<dbReference type="GO" id="GO:0005829">
    <property type="term" value="C:cytosol"/>
    <property type="evidence" value="ECO:0007669"/>
    <property type="project" value="UniProtKB-SubCell"/>
</dbReference>
<dbReference type="GO" id="GO:0005634">
    <property type="term" value="C:nucleus"/>
    <property type="evidence" value="ECO:0007669"/>
    <property type="project" value="UniProtKB-SubCell"/>
</dbReference>
<dbReference type="GO" id="GO:0020037">
    <property type="term" value="F:heme binding"/>
    <property type="evidence" value="ECO:0007669"/>
    <property type="project" value="InterPro"/>
</dbReference>
<dbReference type="GO" id="GO:0046872">
    <property type="term" value="F:metal ion binding"/>
    <property type="evidence" value="ECO:0007669"/>
    <property type="project" value="UniProtKB-KW"/>
</dbReference>
<dbReference type="GO" id="GO:0019825">
    <property type="term" value="F:oxygen binding"/>
    <property type="evidence" value="ECO:0007669"/>
    <property type="project" value="InterPro"/>
</dbReference>
<dbReference type="GO" id="GO:0005344">
    <property type="term" value="F:oxygen carrier activity"/>
    <property type="evidence" value="ECO:0007669"/>
    <property type="project" value="UniProtKB-KW"/>
</dbReference>
<dbReference type="GO" id="GO:0009877">
    <property type="term" value="P:nodulation"/>
    <property type="evidence" value="ECO:0007669"/>
    <property type="project" value="UniProtKB-KW"/>
</dbReference>
<dbReference type="GO" id="GO:0009737">
    <property type="term" value="P:response to abscisic acid"/>
    <property type="evidence" value="ECO:0000270"/>
    <property type="project" value="UniProtKB"/>
</dbReference>
<dbReference type="Gene3D" id="1.10.490.10">
    <property type="entry name" value="Globins"/>
    <property type="match status" value="1"/>
</dbReference>
<dbReference type="InterPro" id="IPR000971">
    <property type="entry name" value="Globin"/>
</dbReference>
<dbReference type="InterPro" id="IPR009050">
    <property type="entry name" value="Globin-like_sf"/>
</dbReference>
<dbReference type="InterPro" id="IPR012292">
    <property type="entry name" value="Globin/Proto"/>
</dbReference>
<dbReference type="InterPro" id="IPR001032">
    <property type="entry name" value="Leghaemoglobin-like"/>
</dbReference>
<dbReference type="InterPro" id="IPR019824">
    <property type="entry name" value="Leghaemoglobin_Fe_BS"/>
</dbReference>
<dbReference type="PANTHER" id="PTHR22924">
    <property type="entry name" value="LEGHEMOGLOBIN-RELATED"/>
    <property type="match status" value="1"/>
</dbReference>
<dbReference type="PANTHER" id="PTHR22924:SF92">
    <property type="entry name" value="NON-SYMBIOTIC HEMOGLOBIN 2"/>
    <property type="match status" value="1"/>
</dbReference>
<dbReference type="Pfam" id="PF00042">
    <property type="entry name" value="Globin"/>
    <property type="match status" value="1"/>
</dbReference>
<dbReference type="PRINTS" id="PR00188">
    <property type="entry name" value="PLANTGLOBIN"/>
</dbReference>
<dbReference type="SUPFAM" id="SSF46458">
    <property type="entry name" value="Globin-like"/>
    <property type="match status" value="1"/>
</dbReference>
<dbReference type="PROSITE" id="PS01033">
    <property type="entry name" value="GLOBIN"/>
    <property type="match status" value="1"/>
</dbReference>
<dbReference type="PROSITE" id="PS00208">
    <property type="entry name" value="PLANT_GLOBIN"/>
    <property type="match status" value="1"/>
</dbReference>
<evidence type="ECO:0000250" key="1">
    <source>
        <dbReference type="UniProtKB" id="P02233"/>
    </source>
</evidence>
<evidence type="ECO:0000250" key="2">
    <source>
        <dbReference type="UniProtKB" id="P02234"/>
    </source>
</evidence>
<evidence type="ECO:0000250" key="3">
    <source>
        <dbReference type="UniProtKB" id="P02237"/>
    </source>
</evidence>
<evidence type="ECO:0000250" key="4">
    <source>
        <dbReference type="UniProtKB" id="P02240"/>
    </source>
</evidence>
<evidence type="ECO:0000250" key="5">
    <source>
        <dbReference type="UniProtKB" id="Q3C1F7"/>
    </source>
</evidence>
<evidence type="ECO:0000250" key="6">
    <source>
        <dbReference type="UniProtKB" id="Q43296"/>
    </source>
</evidence>
<evidence type="ECO:0000255" key="7">
    <source>
        <dbReference type="PROSITE-ProRule" id="PRU00238"/>
    </source>
</evidence>
<evidence type="ECO:0000269" key="8">
    <source>
    </source>
</evidence>
<evidence type="ECO:0000269" key="9">
    <source>
    </source>
</evidence>
<evidence type="ECO:0000269" key="10">
    <source>
    </source>
</evidence>
<evidence type="ECO:0000303" key="11">
    <source>
    </source>
</evidence>
<evidence type="ECO:0000305" key="12"/>
<accession>Q9SAZ1</accession>
<feature type="initiator methionine" description="Removed" evidence="1">
    <location>
        <position position="1"/>
    </location>
</feature>
<feature type="chain" id="PRO_0000192994" description="Leghemoglobin Lb120-8">
    <location>
        <begin position="2"/>
        <end position="146"/>
    </location>
</feature>
<feature type="domain" description="Globin" evidence="7">
    <location>
        <begin position="2"/>
        <end position="146"/>
    </location>
</feature>
<feature type="binding site" evidence="4">
    <location>
        <position position="44"/>
    </location>
    <ligand>
        <name>heme b</name>
        <dbReference type="ChEBI" id="CHEBI:60344"/>
    </ligand>
</feature>
<feature type="binding site" evidence="4">
    <location>
        <position position="61"/>
    </location>
    <ligand>
        <name>O2</name>
        <dbReference type="ChEBI" id="CHEBI:15379"/>
    </ligand>
</feature>
<feature type="binding site" evidence="4">
    <location>
        <position position="64"/>
    </location>
    <ligand>
        <name>heme b</name>
        <dbReference type="ChEBI" id="CHEBI:60344"/>
    </ligand>
</feature>
<feature type="binding site" description="proximal binding residue" evidence="7">
    <location>
        <position position="93"/>
    </location>
    <ligand>
        <name>heme b</name>
        <dbReference type="ChEBI" id="CHEBI:60344"/>
    </ligand>
    <ligandPart>
        <name>Fe</name>
        <dbReference type="ChEBI" id="CHEBI:18248"/>
    </ligandPart>
</feature>
<feature type="binding site" evidence="4">
    <location>
        <position position="96"/>
    </location>
    <ligand>
        <name>heme b</name>
        <dbReference type="ChEBI" id="CHEBI:60344"/>
    </ligand>
</feature>
<feature type="modified residue" description="Nitrated tyrosine" evidence="2">
    <location>
        <position position="24"/>
    </location>
</feature>
<feature type="modified residue" description="Nitrated tyrosine" evidence="2">
    <location>
        <position position="29"/>
    </location>
</feature>
<feature type="modified residue" description="Phosphoserine" evidence="5">
    <location>
        <position position="44"/>
    </location>
</feature>
<feature type="modified residue" description="Nitrated tyrosine" evidence="2">
    <location>
        <position position="134"/>
    </location>
</feature>
<proteinExistence type="evidence at transcript level"/>